<reference key="1">
    <citation type="submission" date="2004-09" db="EMBL/GenBank/DDBJ databases">
        <authorList>
            <consortium name="NIH - Xenopus Gene Collection (XGC) project"/>
        </authorList>
    </citation>
    <scope>NUCLEOTIDE SEQUENCE [LARGE SCALE MRNA]</scope>
    <source>
        <tissue>Oocyte</tissue>
    </source>
</reference>
<protein>
    <recommendedName>
        <fullName>Twinfilin-2-B</fullName>
    </recommendedName>
</protein>
<evidence type="ECO:0000250" key="1"/>
<evidence type="ECO:0000255" key="2">
    <source>
        <dbReference type="PROSITE-ProRule" id="PRU00599"/>
    </source>
</evidence>
<evidence type="ECO:0000256" key="3">
    <source>
        <dbReference type="SAM" id="MobiDB-lite"/>
    </source>
</evidence>
<evidence type="ECO:0000305" key="4"/>
<keyword id="KW-0009">Actin-binding</keyword>
<keyword id="KW-0963">Cytoplasm</keyword>
<keyword id="KW-0206">Cytoskeleton</keyword>
<keyword id="KW-1185">Reference proteome</keyword>
<keyword id="KW-0677">Repeat</keyword>
<sequence>MAHQTGIHATPELKEFFAKARNGSVRLIKVIIEEEQLVLGSHKELKHAWDQDYDAFVLQLLDESQPCYILYRLDSQNAQGYEWIFLSWSPDHSPVRLKMLYAATRATVKKEFGGGHIKDEIFGTLKEDVALSGYKKHVSSCAAPAPLTAAERELQAIKINEVKTEISVESKQQTLQGLSFPLRPQAEEAILLLKQKKINYIQLRLDLEKETVDLVHTKHTEIQDLPGRIPQDTARYHFFLYKHSHEGDHLESVVFIYSMPGYKCSIKERMLYSSCKNRLLDSVEQDFLMEIAKKIEIEDGAELTDEFLYDEVHPKQHAFKQAFAKPKGPAGKRGQKRLIKGPGENGEDS</sequence>
<accession>Q640W2</accession>
<dbReference type="EMBL" id="BC082477">
    <property type="protein sequence ID" value="AAH82477.1"/>
    <property type="molecule type" value="mRNA"/>
</dbReference>
<dbReference type="RefSeq" id="NP_001087921.1">
    <property type="nucleotide sequence ID" value="NM_001094452.1"/>
</dbReference>
<dbReference type="SMR" id="Q640W2"/>
<dbReference type="DNASU" id="447782"/>
<dbReference type="GeneID" id="447782"/>
<dbReference type="KEGG" id="xla:447782"/>
<dbReference type="AGR" id="Xenbase:XB-GENE-6253382"/>
<dbReference type="CTD" id="447782"/>
<dbReference type="Xenbase" id="XB-GENE-6253382">
    <property type="gene designation" value="twf2.S"/>
</dbReference>
<dbReference type="OMA" id="AMTHQTG"/>
<dbReference type="OrthoDB" id="10006997at2759"/>
<dbReference type="Proteomes" id="UP000186698">
    <property type="component" value="Chromosome 4S"/>
</dbReference>
<dbReference type="Bgee" id="447782">
    <property type="expression patterns" value="Expressed in muscle tissue and 19 other cell types or tissues"/>
</dbReference>
<dbReference type="GO" id="GO:0005884">
    <property type="term" value="C:actin filament"/>
    <property type="evidence" value="ECO:0000318"/>
    <property type="project" value="GO_Central"/>
</dbReference>
<dbReference type="GO" id="GO:0005737">
    <property type="term" value="C:cytoplasm"/>
    <property type="evidence" value="ECO:0000318"/>
    <property type="project" value="GO_Central"/>
</dbReference>
<dbReference type="GO" id="GO:0030016">
    <property type="term" value="C:myofibril"/>
    <property type="evidence" value="ECO:0000318"/>
    <property type="project" value="GO_Central"/>
</dbReference>
<dbReference type="GO" id="GO:0048471">
    <property type="term" value="C:perinuclear region of cytoplasm"/>
    <property type="evidence" value="ECO:0007669"/>
    <property type="project" value="UniProtKB-SubCell"/>
</dbReference>
<dbReference type="GO" id="GO:0051015">
    <property type="term" value="F:actin filament binding"/>
    <property type="evidence" value="ECO:0000318"/>
    <property type="project" value="GO_Central"/>
</dbReference>
<dbReference type="GO" id="GO:0003785">
    <property type="term" value="F:actin monomer binding"/>
    <property type="evidence" value="ECO:0000318"/>
    <property type="project" value="GO_Central"/>
</dbReference>
<dbReference type="GO" id="GO:0030042">
    <property type="term" value="P:actin filament depolymerization"/>
    <property type="evidence" value="ECO:0000318"/>
    <property type="project" value="GO_Central"/>
</dbReference>
<dbReference type="GO" id="GO:0051016">
    <property type="term" value="P:barbed-end actin filament capping"/>
    <property type="evidence" value="ECO:0000318"/>
    <property type="project" value="GO_Central"/>
</dbReference>
<dbReference type="GO" id="GO:0010976">
    <property type="term" value="P:positive regulation of neuron projection development"/>
    <property type="evidence" value="ECO:0000318"/>
    <property type="project" value="GO_Central"/>
</dbReference>
<dbReference type="GO" id="GO:0010591">
    <property type="term" value="P:regulation of lamellipodium assembly"/>
    <property type="evidence" value="ECO:0000318"/>
    <property type="project" value="GO_Central"/>
</dbReference>
<dbReference type="CDD" id="cd11284">
    <property type="entry name" value="ADF_Twf-C_like"/>
    <property type="match status" value="1"/>
</dbReference>
<dbReference type="CDD" id="cd11285">
    <property type="entry name" value="ADF_Twf-N_like"/>
    <property type="match status" value="1"/>
</dbReference>
<dbReference type="FunFam" id="3.40.20.10:FF:000007">
    <property type="entry name" value="Twinfilin-1 isoform 1"/>
    <property type="match status" value="1"/>
</dbReference>
<dbReference type="FunFam" id="3.40.20.10:FF:000012">
    <property type="entry name" value="Twinfilin-1 isoform 1"/>
    <property type="match status" value="1"/>
</dbReference>
<dbReference type="Gene3D" id="3.40.20.10">
    <property type="entry name" value="Severin"/>
    <property type="match status" value="2"/>
</dbReference>
<dbReference type="InterPro" id="IPR002108">
    <property type="entry name" value="ADF-H"/>
</dbReference>
<dbReference type="InterPro" id="IPR029006">
    <property type="entry name" value="ADF-H/Gelsolin-like_dom_sf"/>
</dbReference>
<dbReference type="InterPro" id="IPR028458">
    <property type="entry name" value="Twinfilin"/>
</dbReference>
<dbReference type="PANTHER" id="PTHR13759">
    <property type="entry name" value="TWINFILIN"/>
    <property type="match status" value="1"/>
</dbReference>
<dbReference type="PANTHER" id="PTHR13759:SF9">
    <property type="entry name" value="TWINFILIN-2"/>
    <property type="match status" value="1"/>
</dbReference>
<dbReference type="Pfam" id="PF00241">
    <property type="entry name" value="Cofilin_ADF"/>
    <property type="match status" value="2"/>
</dbReference>
<dbReference type="SMART" id="SM00102">
    <property type="entry name" value="ADF"/>
    <property type="match status" value="2"/>
</dbReference>
<dbReference type="SUPFAM" id="SSF55753">
    <property type="entry name" value="Actin depolymerizing proteins"/>
    <property type="match status" value="2"/>
</dbReference>
<dbReference type="PROSITE" id="PS51263">
    <property type="entry name" value="ADF_H"/>
    <property type="match status" value="2"/>
</dbReference>
<name>TWF2B_XENLA</name>
<organism>
    <name type="scientific">Xenopus laevis</name>
    <name type="common">African clawed frog</name>
    <dbReference type="NCBI Taxonomy" id="8355"/>
    <lineage>
        <taxon>Eukaryota</taxon>
        <taxon>Metazoa</taxon>
        <taxon>Chordata</taxon>
        <taxon>Craniata</taxon>
        <taxon>Vertebrata</taxon>
        <taxon>Euteleostomi</taxon>
        <taxon>Amphibia</taxon>
        <taxon>Batrachia</taxon>
        <taxon>Anura</taxon>
        <taxon>Pipoidea</taxon>
        <taxon>Pipidae</taxon>
        <taxon>Xenopodinae</taxon>
        <taxon>Xenopus</taxon>
        <taxon>Xenopus</taxon>
    </lineage>
</organism>
<gene>
    <name type="primary">twf2-b</name>
</gene>
<comment type="function">
    <text evidence="1">Actin-binding protein involved in motile and morphological processes. Inhibits actin polymerization, likely by sequestering G-actin (By similarity).</text>
</comment>
<comment type="subunit">
    <text evidence="1">Interacts with G-actin; ADP-actin form and capping protein (CP).</text>
</comment>
<comment type="subcellular location">
    <subcellularLocation>
        <location evidence="1">Cytoplasm</location>
        <location evidence="1">Cytoskeleton</location>
    </subcellularLocation>
    <subcellularLocation>
        <location evidence="1">Cytoplasm</location>
        <location evidence="1">Perinuclear region</location>
    </subcellularLocation>
    <text evidence="1">Perinuclear and G-actin-rich cortical actin structure sublocalization.</text>
</comment>
<comment type="similarity">
    <text evidence="4">Belongs to the actin-binding proteins ADF family. Twinfilin subfamily.</text>
</comment>
<comment type="online information" name="Protein Spotlight">
    <link uri="https://www.proteinspotlight.org/back_issues/073"/>
    <text>Molecular embrace - Issue 73 of August 2006</text>
</comment>
<feature type="chain" id="PRO_0000233142" description="Twinfilin-2-B">
    <location>
        <begin position="1"/>
        <end position="349"/>
    </location>
</feature>
<feature type="domain" description="ADF-H 1" evidence="2">
    <location>
        <begin position="4"/>
        <end position="139"/>
    </location>
</feature>
<feature type="domain" description="ADF-H 2" evidence="2">
    <location>
        <begin position="177"/>
        <end position="313"/>
    </location>
</feature>
<feature type="region of interest" description="Disordered" evidence="3">
    <location>
        <begin position="321"/>
        <end position="349"/>
    </location>
</feature>
<proteinExistence type="evidence at transcript level"/>